<accession>A9MI14</accession>
<feature type="chain" id="PRO_1000082432" description="Phosphoenolpyruvate carboxylase">
    <location>
        <begin position="1"/>
        <end position="883"/>
    </location>
</feature>
<feature type="active site" evidence="1">
    <location>
        <position position="138"/>
    </location>
</feature>
<feature type="active site" evidence="1">
    <location>
        <position position="546"/>
    </location>
</feature>
<gene>
    <name evidence="1" type="primary">ppc</name>
    <name type="ordered locus">SARI_03545</name>
</gene>
<dbReference type="EC" id="4.1.1.31" evidence="1"/>
<dbReference type="EMBL" id="CP000880">
    <property type="protein sequence ID" value="ABX23360.1"/>
    <property type="molecule type" value="Genomic_DNA"/>
</dbReference>
<dbReference type="SMR" id="A9MI14"/>
<dbReference type="STRING" id="41514.SARI_03545"/>
<dbReference type="KEGG" id="ses:SARI_03545"/>
<dbReference type="HOGENOM" id="CLU_006557_2_0_6"/>
<dbReference type="Proteomes" id="UP000002084">
    <property type="component" value="Chromosome"/>
</dbReference>
<dbReference type="GO" id="GO:0005829">
    <property type="term" value="C:cytosol"/>
    <property type="evidence" value="ECO:0007669"/>
    <property type="project" value="TreeGrafter"/>
</dbReference>
<dbReference type="GO" id="GO:0000287">
    <property type="term" value="F:magnesium ion binding"/>
    <property type="evidence" value="ECO:0007669"/>
    <property type="project" value="UniProtKB-UniRule"/>
</dbReference>
<dbReference type="GO" id="GO:0008964">
    <property type="term" value="F:phosphoenolpyruvate carboxylase activity"/>
    <property type="evidence" value="ECO:0007669"/>
    <property type="project" value="UniProtKB-UniRule"/>
</dbReference>
<dbReference type="GO" id="GO:0015977">
    <property type="term" value="P:carbon fixation"/>
    <property type="evidence" value="ECO:0007669"/>
    <property type="project" value="UniProtKB-UniRule"/>
</dbReference>
<dbReference type="GO" id="GO:0006107">
    <property type="term" value="P:oxaloacetate metabolic process"/>
    <property type="evidence" value="ECO:0007669"/>
    <property type="project" value="UniProtKB-UniRule"/>
</dbReference>
<dbReference type="GO" id="GO:0006099">
    <property type="term" value="P:tricarboxylic acid cycle"/>
    <property type="evidence" value="ECO:0007669"/>
    <property type="project" value="InterPro"/>
</dbReference>
<dbReference type="FunFam" id="1.20.1440.90:FF:000002">
    <property type="entry name" value="Phosphoenolpyruvate carboxylase"/>
    <property type="match status" value="1"/>
</dbReference>
<dbReference type="Gene3D" id="1.20.1440.90">
    <property type="entry name" value="Phosphoenolpyruvate/pyruvate domain"/>
    <property type="match status" value="1"/>
</dbReference>
<dbReference type="HAMAP" id="MF_00595">
    <property type="entry name" value="PEPcase_type1"/>
    <property type="match status" value="1"/>
</dbReference>
<dbReference type="InterPro" id="IPR021135">
    <property type="entry name" value="PEP_COase"/>
</dbReference>
<dbReference type="InterPro" id="IPR022805">
    <property type="entry name" value="PEP_COase_bac/pln-type"/>
</dbReference>
<dbReference type="InterPro" id="IPR018129">
    <property type="entry name" value="PEP_COase_Lys_AS"/>
</dbReference>
<dbReference type="InterPro" id="IPR033129">
    <property type="entry name" value="PEPCASE_His_AS"/>
</dbReference>
<dbReference type="InterPro" id="IPR015813">
    <property type="entry name" value="Pyrv/PenolPyrv_kinase-like_dom"/>
</dbReference>
<dbReference type="NCBIfam" id="NF000584">
    <property type="entry name" value="PRK00009.1"/>
    <property type="match status" value="1"/>
</dbReference>
<dbReference type="PANTHER" id="PTHR30523">
    <property type="entry name" value="PHOSPHOENOLPYRUVATE CARBOXYLASE"/>
    <property type="match status" value="1"/>
</dbReference>
<dbReference type="PANTHER" id="PTHR30523:SF6">
    <property type="entry name" value="PHOSPHOENOLPYRUVATE CARBOXYLASE"/>
    <property type="match status" value="1"/>
</dbReference>
<dbReference type="Pfam" id="PF00311">
    <property type="entry name" value="PEPcase"/>
    <property type="match status" value="1"/>
</dbReference>
<dbReference type="PRINTS" id="PR00150">
    <property type="entry name" value="PEPCARBXLASE"/>
</dbReference>
<dbReference type="SUPFAM" id="SSF51621">
    <property type="entry name" value="Phosphoenolpyruvate/pyruvate domain"/>
    <property type="match status" value="1"/>
</dbReference>
<dbReference type="PROSITE" id="PS00781">
    <property type="entry name" value="PEPCASE_1"/>
    <property type="match status" value="1"/>
</dbReference>
<dbReference type="PROSITE" id="PS00393">
    <property type="entry name" value="PEPCASE_2"/>
    <property type="match status" value="1"/>
</dbReference>
<comment type="function">
    <text evidence="1">Forms oxaloacetate, a four-carbon dicarboxylic acid source for the tricarboxylic acid cycle.</text>
</comment>
<comment type="catalytic activity">
    <reaction evidence="1">
        <text>oxaloacetate + phosphate = phosphoenolpyruvate + hydrogencarbonate</text>
        <dbReference type="Rhea" id="RHEA:28370"/>
        <dbReference type="ChEBI" id="CHEBI:16452"/>
        <dbReference type="ChEBI" id="CHEBI:17544"/>
        <dbReference type="ChEBI" id="CHEBI:43474"/>
        <dbReference type="ChEBI" id="CHEBI:58702"/>
        <dbReference type="EC" id="4.1.1.31"/>
    </reaction>
</comment>
<comment type="cofactor">
    <cofactor evidence="1">
        <name>Mg(2+)</name>
        <dbReference type="ChEBI" id="CHEBI:18420"/>
    </cofactor>
</comment>
<comment type="similarity">
    <text evidence="1">Belongs to the PEPCase type 1 family.</text>
</comment>
<name>CAPP_SALAR</name>
<protein>
    <recommendedName>
        <fullName evidence="1">Phosphoenolpyruvate carboxylase</fullName>
        <shortName evidence="1">PEPC</shortName>
        <shortName evidence="1">PEPCase</shortName>
        <ecNumber evidence="1">4.1.1.31</ecNumber>
    </recommendedName>
</protein>
<organism>
    <name type="scientific">Salmonella arizonae (strain ATCC BAA-731 / CDC346-86 / RSK2980)</name>
    <dbReference type="NCBI Taxonomy" id="41514"/>
    <lineage>
        <taxon>Bacteria</taxon>
        <taxon>Pseudomonadati</taxon>
        <taxon>Pseudomonadota</taxon>
        <taxon>Gammaproteobacteria</taxon>
        <taxon>Enterobacterales</taxon>
        <taxon>Enterobacteriaceae</taxon>
        <taxon>Salmonella</taxon>
    </lineage>
</organism>
<reference key="1">
    <citation type="submission" date="2007-11" db="EMBL/GenBank/DDBJ databases">
        <authorList>
            <consortium name="The Salmonella enterica serovar Arizonae Genome Sequencing Project"/>
            <person name="McClelland M."/>
            <person name="Sanderson E.K."/>
            <person name="Porwollik S."/>
            <person name="Spieth J."/>
            <person name="Clifton W.S."/>
            <person name="Fulton R."/>
            <person name="Chunyan W."/>
            <person name="Wollam A."/>
            <person name="Shah N."/>
            <person name="Pepin K."/>
            <person name="Bhonagiri V."/>
            <person name="Nash W."/>
            <person name="Johnson M."/>
            <person name="Thiruvilangam P."/>
            <person name="Wilson R."/>
        </authorList>
    </citation>
    <scope>NUCLEOTIDE SEQUENCE [LARGE SCALE GENOMIC DNA]</scope>
    <source>
        <strain>ATCC BAA-731 / CDC346-86 / RSK2980</strain>
    </source>
</reference>
<evidence type="ECO:0000255" key="1">
    <source>
        <dbReference type="HAMAP-Rule" id="MF_00595"/>
    </source>
</evidence>
<keyword id="KW-0120">Carbon dioxide fixation</keyword>
<keyword id="KW-0456">Lyase</keyword>
<keyword id="KW-0460">Magnesium</keyword>
<keyword id="KW-1185">Reference proteome</keyword>
<sequence>MNEQYSALRSNVSMLGKVLGETIKDALGEHILDRVETIRKLSKSSRAGNEANRQELLTTLQNLSNDELLPVARAFSQFLNLANTAEQYHSISPKGEAASNPEVIARTLRKLKNQPDLNDATIKKAVESLSLELVLTAHPTEITRRTLIHKMGEINNCLKQLDNTDIADYERHQVMRRLRQLIAQSWHTDEIRKQRPSPVDEAKWGFAVVENSLWQGVPNYLRELNEQLEENLGYKLPVDFVPVRFTSWMGGDRDGNPNVTADITRHVLLLSRWKATDLFLKDIHVLVSELSMVEATPELLALVGEEGASEPYRYLMKKLRARLMATQSWLEARLKGEKLPKPDGLLTQNEQLWEPLYACYQSLQACGMGIIANGELLDTLRRVKCFGVPLVRIDIRQESTRHTEALGEITRYLGIGDYESWSEADKQAFLIRELNSKRPLLPRNWEPSNDTREVLETCKVIAEAPKGSIAAYVISMAKTPSDVLAVHLLLKEAGIGFAMPVAPLFETLDDLNNADDVMTQLLNIDWYRGLIQGKQMVMIGYSDSAKDAGVMAASWAQYQAQDALIKTCEKAGIELTLFHGRGGSIGRGGAPAHAALLSQPPGSLKGGLRVTEQGEMIRFKYGLPEVTVSSLSLYTSAILEANLLPPPEPKDSWRHIMDELSVISCETYRGYVRENKDFVPYFRSATPEQELGKLPLGSRPAKRRPTGGVESLRAIPWIFAWTQNRLMLPAWLGAGTALQKVVEDGKQSELEAMCRDWPFFSTRLGMLEMVFSKADLWLADYYDQRLVAKTLWPLGKELRDLLEEDIKVVLAIANDSHLMADLPWIAESIQLRNVYTDPLNVLQAELLYRSRLTEEQGKSPDPRVEQALMVTIAGVAAGMRNTG</sequence>
<proteinExistence type="inferred from homology"/>